<reference key="1">
    <citation type="journal article" date="1997" name="Science">
        <title>The complete genome sequence of Escherichia coli K-12.</title>
        <authorList>
            <person name="Blattner F.R."/>
            <person name="Plunkett G. III"/>
            <person name="Bloch C.A."/>
            <person name="Perna N.T."/>
            <person name="Burland V."/>
            <person name="Riley M."/>
            <person name="Collado-Vides J."/>
            <person name="Glasner J.D."/>
            <person name="Rode C.K."/>
            <person name="Mayhew G.F."/>
            <person name="Gregor J."/>
            <person name="Davis N.W."/>
            <person name="Kirkpatrick H.A."/>
            <person name="Goeden M.A."/>
            <person name="Rose D.J."/>
            <person name="Mau B."/>
            <person name="Shao Y."/>
        </authorList>
    </citation>
    <scope>NUCLEOTIDE SEQUENCE [LARGE SCALE GENOMIC DNA]</scope>
    <source>
        <strain>K12 / MG1655 / ATCC 47076</strain>
    </source>
</reference>
<reference key="2">
    <citation type="journal article" date="2006" name="Mol. Syst. Biol.">
        <title>Highly accurate genome sequences of Escherichia coli K-12 strains MG1655 and W3110.</title>
        <authorList>
            <person name="Hayashi K."/>
            <person name="Morooka N."/>
            <person name="Yamamoto Y."/>
            <person name="Fujita K."/>
            <person name="Isono K."/>
            <person name="Choi S."/>
            <person name="Ohtsubo E."/>
            <person name="Baba T."/>
            <person name="Wanner B.L."/>
            <person name="Mori H."/>
            <person name="Horiuchi T."/>
        </authorList>
    </citation>
    <scope>NUCLEOTIDE SEQUENCE [LARGE SCALE GENOMIC DNA]</scope>
    <source>
        <strain>K12 / W3110 / ATCC 27325 / DSM 5911</strain>
    </source>
</reference>
<accession>P64488</accession>
<accession>P76248</accession>
<accession>Q2MB23</accession>
<evidence type="ECO:0007829" key="1">
    <source>
        <dbReference type="PDB" id="3BB6"/>
    </source>
</evidence>
<feature type="chain" id="PRO_0000169028" description="Uncharacterized protein YeaR">
    <location>
        <begin position="1"/>
        <end position="119"/>
    </location>
</feature>
<feature type="strand" evidence="1">
    <location>
        <begin position="9"/>
        <end position="13"/>
    </location>
</feature>
<feature type="turn" evidence="1">
    <location>
        <begin position="19"/>
        <end position="21"/>
    </location>
</feature>
<feature type="helix" evidence="1">
    <location>
        <begin position="24"/>
        <end position="27"/>
    </location>
</feature>
<feature type="strand" evidence="1">
    <location>
        <begin position="28"/>
        <end position="30"/>
    </location>
</feature>
<feature type="strand" evidence="1">
    <location>
        <begin position="39"/>
        <end position="57"/>
    </location>
</feature>
<feature type="strand" evidence="1">
    <location>
        <begin position="64"/>
        <end position="71"/>
    </location>
</feature>
<feature type="strand" evidence="1">
    <location>
        <begin position="73"/>
        <end position="76"/>
    </location>
</feature>
<feature type="strand" evidence="1">
    <location>
        <begin position="82"/>
        <end position="89"/>
    </location>
</feature>
<feature type="strand" evidence="1">
    <location>
        <begin position="93"/>
        <end position="100"/>
    </location>
</feature>
<feature type="helix" evidence="1">
    <location>
        <begin position="102"/>
        <end position="105"/>
    </location>
</feature>
<feature type="strand" evidence="1">
    <location>
        <begin position="106"/>
        <end position="108"/>
    </location>
</feature>
<dbReference type="EMBL" id="U00096">
    <property type="protein sequence ID" value="AAC74867.1"/>
    <property type="molecule type" value="Genomic_DNA"/>
</dbReference>
<dbReference type="EMBL" id="AP009048">
    <property type="protein sequence ID" value="BAE76533.1"/>
    <property type="molecule type" value="Genomic_DNA"/>
</dbReference>
<dbReference type="PIR" id="E64940">
    <property type="entry name" value="E64940"/>
</dbReference>
<dbReference type="RefSeq" id="NP_416311.1">
    <property type="nucleotide sequence ID" value="NC_000913.3"/>
</dbReference>
<dbReference type="RefSeq" id="WP_000939317.1">
    <property type="nucleotide sequence ID" value="NZ_SSZK01000001.1"/>
</dbReference>
<dbReference type="PDB" id="3BB6">
    <property type="method" value="X-ray"/>
    <property type="resolution" value="2.30 A"/>
    <property type="chains" value="A/B/C/D=1-119"/>
</dbReference>
<dbReference type="PDBsum" id="3BB6"/>
<dbReference type="SMR" id="P64488"/>
<dbReference type="BioGRID" id="4259152">
    <property type="interactions" value="21"/>
</dbReference>
<dbReference type="BioGRID" id="850674">
    <property type="interactions" value="1"/>
</dbReference>
<dbReference type="FunCoup" id="P64488">
    <property type="interactions" value="84"/>
</dbReference>
<dbReference type="IntAct" id="P64488">
    <property type="interactions" value="7"/>
</dbReference>
<dbReference type="STRING" id="511145.b1797"/>
<dbReference type="jPOST" id="P64488"/>
<dbReference type="PaxDb" id="511145-b1797"/>
<dbReference type="EnsemblBacteria" id="AAC74867">
    <property type="protein sequence ID" value="AAC74867"/>
    <property type="gene ID" value="b1797"/>
</dbReference>
<dbReference type="GeneID" id="75202623"/>
<dbReference type="GeneID" id="946317"/>
<dbReference type="KEGG" id="ecj:JW1786"/>
<dbReference type="KEGG" id="eco:b1797"/>
<dbReference type="KEGG" id="ecoc:C3026_10245"/>
<dbReference type="PATRIC" id="fig|511145.12.peg.1872"/>
<dbReference type="EchoBASE" id="EB3277"/>
<dbReference type="eggNOG" id="COG3615">
    <property type="taxonomic scope" value="Bacteria"/>
</dbReference>
<dbReference type="HOGENOM" id="CLU_147375_1_0_6"/>
<dbReference type="InParanoid" id="P64488"/>
<dbReference type="OMA" id="ASIWKRH"/>
<dbReference type="OrthoDB" id="6506618at2"/>
<dbReference type="PhylomeDB" id="P64488"/>
<dbReference type="BioCyc" id="EcoCyc:G6983-MONOMER"/>
<dbReference type="EvolutionaryTrace" id="P64488"/>
<dbReference type="PRO" id="PR:P64488"/>
<dbReference type="Proteomes" id="UP000000625">
    <property type="component" value="Chromosome"/>
</dbReference>
<dbReference type="Gene3D" id="2.60.120.10">
    <property type="entry name" value="Jelly Rolls"/>
    <property type="match status" value="1"/>
</dbReference>
<dbReference type="InterPro" id="IPR015392">
    <property type="entry name" value="DUF1971"/>
</dbReference>
<dbReference type="InterPro" id="IPR014710">
    <property type="entry name" value="RmlC-like_jellyroll"/>
</dbReference>
<dbReference type="InterPro" id="IPR014510">
    <property type="entry name" value="Tellurite-R_YeaR"/>
</dbReference>
<dbReference type="Pfam" id="PF09313">
    <property type="entry name" value="DUF1971"/>
    <property type="match status" value="1"/>
</dbReference>
<dbReference type="PIRSF" id="PIRSF020632">
    <property type="entry name" value="YeaR"/>
    <property type="match status" value="1"/>
</dbReference>
<dbReference type="SUPFAM" id="SSF51197">
    <property type="entry name" value="Clavaminate synthase-like"/>
    <property type="match status" value="1"/>
</dbReference>
<keyword id="KW-0002">3D-structure</keyword>
<keyword id="KW-1185">Reference proteome</keyword>
<name>YEAR_ECOLI</name>
<proteinExistence type="evidence at protein level"/>
<sequence>MLQIPQNYIHTRSTPFWNKQTAPAGIFERHLDKGTRPGVYPRLSVMHGAVKYLGYADEHSAEPDQVILIEAGQFAVFPPEKWHNIEAMTDDTYFNIDFFVAPEVLMEGAQQRKVIHNGK</sequence>
<protein>
    <recommendedName>
        <fullName>Uncharacterized protein YeaR</fullName>
    </recommendedName>
</protein>
<organism>
    <name type="scientific">Escherichia coli (strain K12)</name>
    <dbReference type="NCBI Taxonomy" id="83333"/>
    <lineage>
        <taxon>Bacteria</taxon>
        <taxon>Pseudomonadati</taxon>
        <taxon>Pseudomonadota</taxon>
        <taxon>Gammaproteobacteria</taxon>
        <taxon>Enterobacterales</taxon>
        <taxon>Enterobacteriaceae</taxon>
        <taxon>Escherichia</taxon>
    </lineage>
</organism>
<gene>
    <name type="primary">yeaR</name>
    <name type="ordered locus">b1797</name>
    <name type="ordered locus">JW1786</name>
</gene>